<name>FIMB4_ARATH</name>
<protein>
    <recommendedName>
        <fullName evidence="5">Fimbrin-4</fullName>
        <shortName>AtFIM4</shortName>
    </recommendedName>
    <alternativeName>
        <fullName evidence="5">Fimbrin4</fullName>
    </alternativeName>
</protein>
<accession>Q9SJ84</accession>
<feature type="chain" id="PRO_0000430599" description="Fimbrin-4">
    <location>
        <begin position="1"/>
        <end position="652"/>
    </location>
</feature>
<feature type="domain" description="Calponin-homology (CH) 1" evidence="2">
    <location>
        <begin position="116"/>
        <end position="233"/>
    </location>
</feature>
<feature type="domain" description="Calponin-homology (CH) 2" evidence="2">
    <location>
        <begin position="261"/>
        <end position="364"/>
    </location>
</feature>
<feature type="domain" description="Calponin-homology (CH) 3" evidence="2">
    <location>
        <begin position="388"/>
        <end position="494"/>
    </location>
</feature>
<feature type="domain" description="Calponin-homology (CH) 4" evidence="2">
    <location>
        <begin position="509"/>
        <end position="617"/>
    </location>
</feature>
<feature type="region of interest" description="Actin-binding 1" evidence="3">
    <location>
        <begin position="116"/>
        <end position="364"/>
    </location>
</feature>
<feature type="region of interest" description="Actin-binding 2" evidence="3">
    <location>
        <begin position="388"/>
        <end position="617"/>
    </location>
</feature>
<feature type="region of interest" description="Disordered" evidence="4">
    <location>
        <begin position="623"/>
        <end position="652"/>
    </location>
</feature>
<feature type="compositionally biased region" description="Polar residues" evidence="4">
    <location>
        <begin position="640"/>
        <end position="652"/>
    </location>
</feature>
<organism>
    <name type="scientific">Arabidopsis thaliana</name>
    <name type="common">Mouse-ear cress</name>
    <dbReference type="NCBI Taxonomy" id="3702"/>
    <lineage>
        <taxon>Eukaryota</taxon>
        <taxon>Viridiplantae</taxon>
        <taxon>Streptophyta</taxon>
        <taxon>Embryophyta</taxon>
        <taxon>Tracheophyta</taxon>
        <taxon>Spermatophyta</taxon>
        <taxon>Magnoliopsida</taxon>
        <taxon>eudicotyledons</taxon>
        <taxon>Gunneridae</taxon>
        <taxon>Pentapetalae</taxon>
        <taxon>rosids</taxon>
        <taxon>malvids</taxon>
        <taxon>Brassicales</taxon>
        <taxon>Brassicaceae</taxon>
        <taxon>Camelineae</taxon>
        <taxon>Arabidopsis</taxon>
    </lineage>
</organism>
<dbReference type="EMBL" id="AC006955">
    <property type="protein sequence ID" value="AAD22331.1"/>
    <property type="molecule type" value="Genomic_DNA"/>
</dbReference>
<dbReference type="EMBL" id="CP002685">
    <property type="protein sequence ID" value="AEC05860.1"/>
    <property type="molecule type" value="Genomic_DNA"/>
</dbReference>
<dbReference type="PIR" id="A84461">
    <property type="entry name" value="A84461"/>
</dbReference>
<dbReference type="RefSeq" id="NP_178552.1">
    <property type="nucleotide sequence ID" value="NM_126505.1"/>
</dbReference>
<dbReference type="SMR" id="Q9SJ84"/>
<dbReference type="FunCoup" id="Q9SJ84">
    <property type="interactions" value="2128"/>
</dbReference>
<dbReference type="STRING" id="3702.Q9SJ84"/>
<dbReference type="iPTMnet" id="Q9SJ84"/>
<dbReference type="PaxDb" id="3702-AT2G04750.1"/>
<dbReference type="EnsemblPlants" id="AT2G04750.1">
    <property type="protein sequence ID" value="AT2G04750.1"/>
    <property type="gene ID" value="AT2G04750"/>
</dbReference>
<dbReference type="GeneID" id="815018"/>
<dbReference type="Gramene" id="AT2G04750.1">
    <property type="protein sequence ID" value="AT2G04750.1"/>
    <property type="gene ID" value="AT2G04750"/>
</dbReference>
<dbReference type="KEGG" id="ath:AT2G04750"/>
<dbReference type="Araport" id="AT2G04750"/>
<dbReference type="TAIR" id="AT2G04750">
    <property type="gene designation" value="ATFIM3"/>
</dbReference>
<dbReference type="eggNOG" id="KOG0046">
    <property type="taxonomic scope" value="Eukaryota"/>
</dbReference>
<dbReference type="HOGENOM" id="CLU_015284_3_1_1"/>
<dbReference type="InParanoid" id="Q9SJ84"/>
<dbReference type="OMA" id="WNSYIPI"/>
<dbReference type="OrthoDB" id="431378at2759"/>
<dbReference type="PhylomeDB" id="Q9SJ84"/>
<dbReference type="PRO" id="PR:Q9SJ84"/>
<dbReference type="Proteomes" id="UP000006548">
    <property type="component" value="Chromosome 2"/>
</dbReference>
<dbReference type="ExpressionAtlas" id="Q9SJ84">
    <property type="expression patterns" value="baseline and differential"/>
</dbReference>
<dbReference type="GO" id="GO:0005737">
    <property type="term" value="C:cytoplasm"/>
    <property type="evidence" value="ECO:0007669"/>
    <property type="project" value="UniProtKB-KW"/>
</dbReference>
<dbReference type="GO" id="GO:0005856">
    <property type="term" value="C:cytoskeleton"/>
    <property type="evidence" value="ECO:0007669"/>
    <property type="project" value="UniProtKB-SubCell"/>
</dbReference>
<dbReference type="GO" id="GO:0051015">
    <property type="term" value="F:actin filament binding"/>
    <property type="evidence" value="ECO:0007669"/>
    <property type="project" value="InterPro"/>
</dbReference>
<dbReference type="GO" id="GO:0051017">
    <property type="term" value="P:actin filament bundle assembly"/>
    <property type="evidence" value="ECO:0000314"/>
    <property type="project" value="TAIR"/>
</dbReference>
<dbReference type="CDD" id="cd21293">
    <property type="entry name" value="CH_AtFIM_like_rpt1"/>
    <property type="match status" value="1"/>
</dbReference>
<dbReference type="CDD" id="cd21296">
    <property type="entry name" value="CH_AtFIM_like_rpt2"/>
    <property type="match status" value="1"/>
</dbReference>
<dbReference type="CDD" id="cd21299">
    <property type="entry name" value="CH_AtFIM_like_rpt3"/>
    <property type="match status" value="1"/>
</dbReference>
<dbReference type="CDD" id="cd21302">
    <property type="entry name" value="CH_AtFIM_like_rpt4"/>
    <property type="match status" value="1"/>
</dbReference>
<dbReference type="FunFam" id="1.10.418.10:FF:000045">
    <property type="entry name" value="Fimbrin-1 isoform A"/>
    <property type="match status" value="1"/>
</dbReference>
<dbReference type="FunFam" id="1.10.418.10:FF:000041">
    <property type="entry name" value="Fimbrin-2 isoform A"/>
    <property type="match status" value="1"/>
</dbReference>
<dbReference type="FunFam" id="1.10.418.10:FF:000031">
    <property type="entry name" value="Fimbrin-2 like"/>
    <property type="match status" value="1"/>
</dbReference>
<dbReference type="FunFam" id="1.10.418.10:FF:000034">
    <property type="entry name" value="Fimbrin-2 like"/>
    <property type="match status" value="1"/>
</dbReference>
<dbReference type="Gene3D" id="1.10.418.10">
    <property type="entry name" value="Calponin-like domain"/>
    <property type="match status" value="4"/>
</dbReference>
<dbReference type="InterPro" id="IPR001715">
    <property type="entry name" value="CH_dom"/>
</dbReference>
<dbReference type="InterPro" id="IPR036872">
    <property type="entry name" value="CH_dom_sf"/>
</dbReference>
<dbReference type="InterPro" id="IPR039959">
    <property type="entry name" value="Fimbrin/Plastin"/>
</dbReference>
<dbReference type="PANTHER" id="PTHR19961:SF66">
    <property type="entry name" value="FIMBRIN-4"/>
    <property type="match status" value="1"/>
</dbReference>
<dbReference type="PANTHER" id="PTHR19961">
    <property type="entry name" value="FIMBRIN/PLASTIN"/>
    <property type="match status" value="1"/>
</dbReference>
<dbReference type="Pfam" id="PF00307">
    <property type="entry name" value="CH"/>
    <property type="match status" value="4"/>
</dbReference>
<dbReference type="SMART" id="SM00033">
    <property type="entry name" value="CH"/>
    <property type="match status" value="4"/>
</dbReference>
<dbReference type="SUPFAM" id="SSF47576">
    <property type="entry name" value="Calponin-homology domain, CH-domain"/>
    <property type="match status" value="1"/>
</dbReference>
<dbReference type="PROSITE" id="PS50021">
    <property type="entry name" value="CH"/>
    <property type="match status" value="4"/>
</dbReference>
<sequence>MSSYVGVLVSDPWLQSQFTQVELRTLKSKFYSTKTRFGRVTVKHLPPVFAKLKYFNGKFDENEIKTILDESYPNRAKEVEFETFLRAFLSVQSRGSKGASSFLKTSTTTFHHSINESEKASYVSHINSYLKDEPNLKSYLPINPTTNALFDLVKDGVLLCKLINIAVPGTIDERAINTKKELNPWERTENLSLCLNSAKAIGCTVVNIGTQDIAEGTPHLVLGLIFQIIKIQLLADLNLKKTPQLVELVEENQDVEELMGLAPEKLLLKWMNFHLKKAGYEKQVTNFSSDVKDGEAYAYLLNALAPEHSTNVTLEIKDPSERATKVLEQAEKLDCKRFLSPKDIVEGSANLNLAFVAQLFHHRNGLSDESPKVPISVAEMVTEDEETSREERCFRHWMNSLGAVTYVDNVFEDVRNGWVLLEVLDKVSPGSVNWKHANKPPIKMPFKKVENCNQVIKIGKELNFSLVNVAGHDIMQGNKKLLLAFLWQLMRYTMLQILNNLRSHCQGKDITEADILNWANRKVKKSGRTSQAVSFKDKNLANGIFFLELLSAVEPRVVNWSLVSKGETQEEKNLNATYIISVARKLGCSIFLLPEDILEVNQRMMLILAASIMNWSLQQQSDTESTVSDDTDVSSVTEEISNLSTDDGSSDV</sequence>
<keyword id="KW-0009">Actin-binding</keyword>
<keyword id="KW-0963">Cytoplasm</keyword>
<keyword id="KW-0206">Cytoskeleton</keyword>
<keyword id="KW-1185">Reference proteome</keyword>
<keyword id="KW-0677">Repeat</keyword>
<reference key="1">
    <citation type="journal article" date="1999" name="Nature">
        <title>Sequence and analysis of chromosome 2 of the plant Arabidopsis thaliana.</title>
        <authorList>
            <person name="Lin X."/>
            <person name="Kaul S."/>
            <person name="Rounsley S.D."/>
            <person name="Shea T.P."/>
            <person name="Benito M.-I."/>
            <person name="Town C.D."/>
            <person name="Fujii C.Y."/>
            <person name="Mason T.M."/>
            <person name="Bowman C.L."/>
            <person name="Barnstead M.E."/>
            <person name="Feldblyum T.V."/>
            <person name="Buell C.R."/>
            <person name="Ketchum K.A."/>
            <person name="Lee J.J."/>
            <person name="Ronning C.M."/>
            <person name="Koo H.L."/>
            <person name="Moffat K.S."/>
            <person name="Cronin L.A."/>
            <person name="Shen M."/>
            <person name="Pai G."/>
            <person name="Van Aken S."/>
            <person name="Umayam L."/>
            <person name="Tallon L.J."/>
            <person name="Gill J.E."/>
            <person name="Adams M.D."/>
            <person name="Carrera A.J."/>
            <person name="Creasy T.H."/>
            <person name="Goodman H.M."/>
            <person name="Somerville C.R."/>
            <person name="Copenhaver G.P."/>
            <person name="Preuss D."/>
            <person name="Nierman W.C."/>
            <person name="White O."/>
            <person name="Eisen J.A."/>
            <person name="Salzberg S.L."/>
            <person name="Fraser C.M."/>
            <person name="Venter J.C."/>
        </authorList>
    </citation>
    <scope>NUCLEOTIDE SEQUENCE [LARGE SCALE GENOMIC DNA]</scope>
    <source>
        <strain>cv. Columbia</strain>
    </source>
</reference>
<reference key="2">
    <citation type="journal article" date="2017" name="Plant J.">
        <title>Araport11: a complete reannotation of the Arabidopsis thaliana reference genome.</title>
        <authorList>
            <person name="Cheng C.Y."/>
            <person name="Krishnakumar V."/>
            <person name="Chan A.P."/>
            <person name="Thibaud-Nissen F."/>
            <person name="Schobel S."/>
            <person name="Town C.D."/>
        </authorList>
    </citation>
    <scope>GENOME REANNOTATION</scope>
    <source>
        <strain>cv. Columbia</strain>
    </source>
</reference>
<gene>
    <name evidence="5" type="primary">FIM4</name>
    <name evidence="6" type="ordered locus">At2g04750</name>
    <name evidence="7" type="ORF">F28I8.21</name>
</gene>
<proteinExistence type="inferred from homology"/>
<comment type="function">
    <text evidence="1">Cross-links actin filaments (F-actin). Stabilizes and prevents F-actin depolymerization mediated by profilin. May regulate actin cytoarchitecture, cell cycle, cell division, cell elongation and cytoplasmic tractus.</text>
</comment>
<comment type="subunit">
    <text evidence="1">Interacts with F-actin.</text>
</comment>
<comment type="subcellular location">
    <subcellularLocation>
        <location evidence="1">Cytoplasm</location>
        <location evidence="1">Cytoskeleton</location>
    </subcellularLocation>
</comment>
<evidence type="ECO:0000250" key="1">
    <source>
        <dbReference type="UniProtKB" id="Q7G188"/>
    </source>
</evidence>
<evidence type="ECO:0000255" key="2">
    <source>
        <dbReference type="PROSITE-ProRule" id="PRU00044"/>
    </source>
</evidence>
<evidence type="ECO:0000255" key="3">
    <source>
        <dbReference type="PROSITE-ProRule" id="PRU00300"/>
    </source>
</evidence>
<evidence type="ECO:0000256" key="4">
    <source>
        <dbReference type="SAM" id="MobiDB-lite"/>
    </source>
</evidence>
<evidence type="ECO:0000305" key="5"/>
<evidence type="ECO:0000312" key="6">
    <source>
        <dbReference type="Araport" id="AT2G04750"/>
    </source>
</evidence>
<evidence type="ECO:0000312" key="7">
    <source>
        <dbReference type="EMBL" id="AAD22331.1"/>
    </source>
</evidence>